<reference key="1">
    <citation type="submission" date="2000-03" db="EMBL/GenBank/DDBJ databases">
        <title>Cloning and expression analysis of the tilapia (Oreochromis mossambicus)ribosomal protein L18 gene.</title>
        <authorList>
            <person name="Molina A.I. Jr."/>
            <person name="Biemar F."/>
            <person name="Iyengar A."/>
            <person name="Maclean N."/>
            <person name="Martial J.A."/>
            <person name="Muller M."/>
        </authorList>
    </citation>
    <scope>NUCLEOTIDE SEQUENCE [GENOMIC DNA]</scope>
    <source>
        <tissue>Liver</tissue>
    </source>
</reference>
<gene>
    <name type="primary">rpl18</name>
</gene>
<evidence type="ECO:0000250" key="1">
    <source>
        <dbReference type="UniProtKB" id="Q07020"/>
    </source>
</evidence>
<evidence type="ECO:0000250" key="2">
    <source>
        <dbReference type="UniProtKB" id="Q95342"/>
    </source>
</evidence>
<evidence type="ECO:0000256" key="3">
    <source>
        <dbReference type="SAM" id="MobiDB-lite"/>
    </source>
</evidence>
<evidence type="ECO:0000305" key="4"/>
<dbReference type="EMBL" id="AF240376">
    <property type="protein sequence ID" value="AAF64459.1"/>
    <property type="molecule type" value="Genomic_DNA"/>
</dbReference>
<dbReference type="SMR" id="P69090"/>
<dbReference type="GO" id="GO:0022625">
    <property type="term" value="C:cytosolic large ribosomal subunit"/>
    <property type="evidence" value="ECO:0000250"/>
    <property type="project" value="UniProtKB"/>
</dbReference>
<dbReference type="GO" id="GO:0005791">
    <property type="term" value="C:rough endoplasmic reticulum"/>
    <property type="evidence" value="ECO:0007669"/>
    <property type="project" value="UniProtKB-SubCell"/>
</dbReference>
<dbReference type="GO" id="GO:0003723">
    <property type="term" value="F:RNA binding"/>
    <property type="evidence" value="ECO:0007669"/>
    <property type="project" value="TreeGrafter"/>
</dbReference>
<dbReference type="GO" id="GO:0003735">
    <property type="term" value="F:structural constituent of ribosome"/>
    <property type="evidence" value="ECO:0007669"/>
    <property type="project" value="InterPro"/>
</dbReference>
<dbReference type="GO" id="GO:0002181">
    <property type="term" value="P:cytoplasmic translation"/>
    <property type="evidence" value="ECO:0000250"/>
    <property type="project" value="UniProtKB"/>
</dbReference>
<dbReference type="FunFam" id="3.100.10.10:FF:000001">
    <property type="entry name" value="60S ribosomal protein L18"/>
    <property type="match status" value="1"/>
</dbReference>
<dbReference type="Gene3D" id="3.100.10.10">
    <property type="match status" value="1"/>
</dbReference>
<dbReference type="InterPro" id="IPR000039">
    <property type="entry name" value="Ribosomal_eL18"/>
</dbReference>
<dbReference type="InterPro" id="IPR021132">
    <property type="entry name" value="Ribosomal_eL18/eL18-A/B/_CS"/>
</dbReference>
<dbReference type="InterPro" id="IPR021131">
    <property type="entry name" value="Ribosomal_uL15/eL18"/>
</dbReference>
<dbReference type="InterPro" id="IPR036227">
    <property type="entry name" value="Ribosomal_uL15/eL18_sf"/>
</dbReference>
<dbReference type="PANTHER" id="PTHR10934">
    <property type="entry name" value="60S RIBOSOMAL PROTEIN L18"/>
    <property type="match status" value="1"/>
</dbReference>
<dbReference type="PANTHER" id="PTHR10934:SF2">
    <property type="entry name" value="LARGE RIBOSOMAL SUBUNIT PROTEIN EL18"/>
    <property type="match status" value="1"/>
</dbReference>
<dbReference type="Pfam" id="PF17135">
    <property type="entry name" value="Ribosomal_L18"/>
    <property type="match status" value="1"/>
</dbReference>
<dbReference type="SUPFAM" id="SSF52080">
    <property type="entry name" value="Ribosomal proteins L15p and L18e"/>
    <property type="match status" value="1"/>
</dbReference>
<dbReference type="PROSITE" id="PS01106">
    <property type="entry name" value="RIBOSOMAL_L18E"/>
    <property type="match status" value="1"/>
</dbReference>
<keyword id="KW-0963">Cytoplasm</keyword>
<keyword id="KW-0256">Endoplasmic reticulum</keyword>
<keyword id="KW-0687">Ribonucleoprotein</keyword>
<keyword id="KW-0689">Ribosomal protein</keyword>
<accession>P69090</accession>
<accession>Q9I836</accession>
<feature type="chain" id="PRO_0000132776" description="Large ribosomal subunit protein eL18">
    <location>
        <begin position="1"/>
        <end position="188"/>
    </location>
</feature>
<feature type="region of interest" description="Disordered" evidence="3">
    <location>
        <begin position="153"/>
        <end position="188"/>
    </location>
</feature>
<feature type="compositionally biased region" description="Basic residues" evidence="3">
    <location>
        <begin position="161"/>
        <end position="171"/>
    </location>
</feature>
<sequence length="188" mass="21531">MGVDIRHNKDRKVHRKEPKSQDIYLRLLVKLYRFLARRSNAPFNRVVLRRLFMSRTNRPPIAVSRLIRKMKLPGRENKIAVVVGTVTDDVRIQDIPKLKICALRVTDGARRRILKAGGQVMTFDQLALASPKGQGTVLLSGPRKAREVYRHFGKAPGTPHSHTKPYVRSKGRKFERARGRRASCGYKN</sequence>
<proteinExistence type="inferred from homology"/>
<name>RL18_OREMO</name>
<comment type="function">
    <text evidence="1">Component of the large ribosomal subunit. The ribosome is a large ribonucleoprotein complex responsible for the synthesis of proteins in the cell.</text>
</comment>
<comment type="subunit">
    <text evidence="1">Component of the large ribosomal subunit.</text>
</comment>
<comment type="subcellular location">
    <subcellularLocation>
        <location evidence="1">Cytoplasm</location>
        <location evidence="1">Cytosol</location>
    </subcellularLocation>
    <subcellularLocation>
        <location evidence="1">Cytoplasm</location>
    </subcellularLocation>
    <subcellularLocation>
        <location evidence="2">Rough endoplasmic reticulum</location>
    </subcellularLocation>
    <text evidence="1 2">Detected on cytosolic polysomes (By similarity). Detected in ribosomes that are associated with the rough endoplasmic reticulum (By similarity).</text>
</comment>
<comment type="similarity">
    <text evidence="4">Belongs to the eukaryotic ribosomal protein eL18 family.</text>
</comment>
<organism>
    <name type="scientific">Oreochromis mossambicus</name>
    <name type="common">Mozambique tilapia</name>
    <name type="synonym">Tilapia mossambica</name>
    <dbReference type="NCBI Taxonomy" id="8127"/>
    <lineage>
        <taxon>Eukaryota</taxon>
        <taxon>Metazoa</taxon>
        <taxon>Chordata</taxon>
        <taxon>Craniata</taxon>
        <taxon>Vertebrata</taxon>
        <taxon>Euteleostomi</taxon>
        <taxon>Actinopterygii</taxon>
        <taxon>Neopterygii</taxon>
        <taxon>Teleostei</taxon>
        <taxon>Neoteleostei</taxon>
        <taxon>Acanthomorphata</taxon>
        <taxon>Ovalentaria</taxon>
        <taxon>Cichlomorphae</taxon>
        <taxon>Cichliformes</taxon>
        <taxon>Cichlidae</taxon>
        <taxon>African cichlids</taxon>
        <taxon>Pseudocrenilabrinae</taxon>
        <taxon>Oreochromini</taxon>
        <taxon>Oreochromis</taxon>
    </lineage>
</organism>
<protein>
    <recommendedName>
        <fullName evidence="4">Large ribosomal subunit protein eL18</fullName>
    </recommendedName>
    <alternativeName>
        <fullName>60S ribosomal protein L18</fullName>
    </alternativeName>
</protein>